<proteinExistence type="evidence at protein level"/>
<protein>
    <recommendedName>
        <fullName>Protein p26</fullName>
    </recommendedName>
</protein>
<comment type="subunit">
    <text evidence="3">Self-associates.</text>
</comment>
<comment type="subcellular location">
    <subcellularLocation>
        <location evidence="1 2">Host cell junction</location>
        <location evidence="1 2">Host plasmodesma</location>
    </subcellularLocation>
    <text>Found in plasmalemma deposits.</text>
</comment>
<reference key="1">
    <citation type="journal article" date="1995" name="Virology">
        <title>Genome structure and phylogenetic analysis of lettuce infectious yellows virus, a whitefly-transmitted, bipartite closterovirus.</title>
        <authorList>
            <person name="Klaassen V.A."/>
            <person name="Boeshore M.L."/>
            <person name="Koonin E.V."/>
            <person name="Tian T."/>
            <person name="Falk B.W."/>
        </authorList>
    </citation>
    <scope>NUCLEOTIDE SEQUENCE [GENOMIC RNA]</scope>
</reference>
<reference key="2">
    <citation type="journal article" date="2009" name="Virus Res.">
        <title>Two Crinivirus-specific proteins of Lettuce infectious yellows virus (LIYV), P26 and P9, are self-interacting.</title>
        <authorList>
            <person name="Stewart L.R."/>
            <person name="Hwang M.S."/>
            <person name="Falk B.W."/>
        </authorList>
    </citation>
    <scope>SUBUNIT</scope>
</reference>
<reference key="3">
    <citation type="journal article" date="2005" name="Virology">
        <title>The Lettuce infectious yellows virus (LIYV)-encoded P26 is associated with plasmalemma deposits within LIYV-infected cells.</title>
        <authorList>
            <person name="Medina V."/>
            <person name="Sudarshana M.R."/>
            <person name="Tian T."/>
            <person name="Ralston K.S."/>
            <person name="Yeh H.H."/>
            <person name="Falk B.W."/>
        </authorList>
    </citation>
    <scope>SUBCELLULAR LOCATION</scope>
</reference>
<reference key="4">
    <citation type="journal article" date="2009" name="Virology">
        <title>Lettuce infectious yellows virus-encoded P26 induces plasmalemma deposit cytopathology.</title>
        <authorList>
            <person name="Stewart L.R."/>
            <person name="Medina V."/>
            <person name="Sudarshana M.R."/>
            <person name="Falk B.W."/>
        </authorList>
    </citation>
    <scope>SUBCELLULAR LOCATION</scope>
    <source>
        <strain>Infectious clone pSP6</strain>
    </source>
</reference>
<dbReference type="EMBL" id="U15441">
    <property type="protein sequence ID" value="AAA61804.1"/>
    <property type="molecule type" value="Genomic_RNA"/>
</dbReference>
<dbReference type="RefSeq" id="NP_619699.1">
    <property type="nucleotide sequence ID" value="NC_003618.1"/>
</dbReference>
<dbReference type="GeneID" id="991079"/>
<dbReference type="KEGG" id="vg:991079"/>
<dbReference type="Proteomes" id="UP000001099">
    <property type="component" value="Genome"/>
</dbReference>
<dbReference type="GO" id="GO:0044219">
    <property type="term" value="C:host cell plasmodesma"/>
    <property type="evidence" value="ECO:0007669"/>
    <property type="project" value="UniProtKB-SubCell"/>
</dbReference>
<dbReference type="InterPro" id="IPR009985">
    <property type="entry name" value="Crinivirus_P26"/>
</dbReference>
<dbReference type="Pfam" id="PF07416">
    <property type="entry name" value="Crinivirus_P26"/>
    <property type="match status" value="1"/>
</dbReference>
<keyword id="KW-1031">Host cell junction</keyword>
<keyword id="KW-1185">Reference proteome</keyword>
<accession>Q83051</accession>
<feature type="chain" id="PRO_0000402513" description="Protein p26">
    <location>
        <begin position="1"/>
        <end position="227"/>
    </location>
</feature>
<name>P26_LIYV9</name>
<organism>
    <name type="scientific">Lettuce infectious yellows virus (isolate United States/92)</name>
    <name type="common">LIYV</name>
    <dbReference type="NCBI Taxonomy" id="651355"/>
    <lineage>
        <taxon>Viruses</taxon>
        <taxon>Riboviria</taxon>
        <taxon>Orthornavirae</taxon>
        <taxon>Kitrinoviricota</taxon>
        <taxon>Alsuviricetes</taxon>
        <taxon>Martellivirales</taxon>
        <taxon>Closteroviridae</taxon>
        <taxon>Crinivirus</taxon>
        <taxon>Lettuce infectious yellows virus</taxon>
    </lineage>
</organism>
<evidence type="ECO:0000269" key="1">
    <source>
    </source>
</evidence>
<evidence type="ECO:0000269" key="2">
    <source>
    </source>
</evidence>
<evidence type="ECO:0000269" key="3">
    <source>
    </source>
</evidence>
<sequence>MNNFPEIFDDESTCDYDKEIDHQELSDTFWCLMDFISSKHGKSVADINSGMNTLINIRKSLNGSGKVVSITDSYNKTYFHSQRGLTNVDSRINIDILKIDFISIIDDLQIIFRGLIYKDKGFLDSADLLDLDKKTTTRKFQEYFNILKIKIIEKIGMTKTFHFNIDFRNTISPLDKQRKCSISSSHKKTNRLNDLNNYITYLNDNIVLTFRWKGVGFGGLSLNDIKI</sequence>
<organismHost>
    <name type="scientific">Beta vulgaris</name>
    <name type="common">Sugar beet</name>
    <dbReference type="NCBI Taxonomy" id="161934"/>
</organismHost>
<organismHost>
    <name type="scientific">Citrullus lanatus</name>
    <name type="common">Watermelon</name>
    <name type="synonym">Citrullus vulgaris</name>
    <dbReference type="NCBI Taxonomy" id="3654"/>
</organismHost>
<organismHost>
    <name type="scientific">Cucumis melo</name>
    <name type="common">Muskmelon</name>
    <dbReference type="NCBI Taxonomy" id="3656"/>
</organismHost>
<organismHost>
    <name type="scientific">Cucurbita maxima</name>
    <name type="common">Pumpkin</name>
    <name type="synonym">Winter squash</name>
    <dbReference type="NCBI Taxonomy" id="3661"/>
</organismHost>
<organismHost>
    <name type="scientific">Cucurbita moschata</name>
    <name type="common">Winter crookneck squash</name>
    <name type="synonym">Cucurbita pepo var. moschata</name>
    <dbReference type="NCBI Taxonomy" id="3662"/>
</organismHost>
<organismHost>
    <name type="scientific">Cucurbita pepo</name>
    <name type="common">Vegetable marrow</name>
    <name type="synonym">Summer squash</name>
    <dbReference type="NCBI Taxonomy" id="3663"/>
</organismHost>
<organismHost>
    <name type="scientific">Daucus carota</name>
    <name type="common">Wild carrot</name>
    <dbReference type="NCBI Taxonomy" id="4039"/>
</organismHost>
<organismHost>
    <name type="scientific">Lactuca sativa</name>
    <name type="common">Garden lettuce</name>
    <dbReference type="NCBI Taxonomy" id="4236"/>
</organismHost>